<protein>
    <recommendedName>
        <fullName>Acetylgalactosaminyl-O-glycosyl-glycoprotein beta-1,3-N-acetylglucosaminyltransferase</fullName>
        <ecNumber evidence="4">2.4.1.147</ecNumber>
    </recommendedName>
    <alternativeName>
        <fullName>Core 3 synthase</fullName>
    </alternativeName>
    <alternativeName>
        <fullName>UDP-GlcNAc:betaGal beta-1,3-N-acetylglucosaminyltransferase 6</fullName>
        <shortName>BGnT-6</shortName>
        <shortName>Beta-1,3-Gn-T6</shortName>
        <shortName>Beta-1,3-N-acetylglucosaminyltransferase 6</shortName>
        <shortName>Beta3Gn-T6</shortName>
    </alternativeName>
</protein>
<organism>
    <name type="scientific">Homo sapiens</name>
    <name type="common">Human</name>
    <dbReference type="NCBI Taxonomy" id="9606"/>
    <lineage>
        <taxon>Eukaryota</taxon>
        <taxon>Metazoa</taxon>
        <taxon>Chordata</taxon>
        <taxon>Craniata</taxon>
        <taxon>Vertebrata</taxon>
        <taxon>Euteleostomi</taxon>
        <taxon>Mammalia</taxon>
        <taxon>Eutheria</taxon>
        <taxon>Euarchontoglires</taxon>
        <taxon>Primates</taxon>
        <taxon>Haplorrhini</taxon>
        <taxon>Catarrhini</taxon>
        <taxon>Hominidae</taxon>
        <taxon>Homo</taxon>
    </lineage>
</organism>
<name>B3GN6_HUMAN</name>
<accession>Q6ZMB0</accession>
<accession>E9PKS1</accession>
<accession>Q6ZSC5</accession>
<accession>Q8TAZ4</accession>
<accession>Q8TDX1</accession>
<sequence length="384" mass="42748">MAFPCRRSLTAKTLACLLVGVSFLALQQWFLQAPRSPREERSPQEETPEGPTDAPAADEPPSELVPGPPCVANASANATADFEQLPARIQDFLRYRHCRHFPLLWDAPAKCAGGRGVFLLLAVKSAPEHYERRELIRRTWGQERSYGGRPVRRLFLLGTPGPEDEARAERLAELVALEAREHGDVLQWAFADTFLNLTLKHLHLLDWLAARCPHARFLLSGDDDVFVHTANVVRFLQAQPPGRHLFSGQLMEGSVPIRDSWSKYFVPPQLFPGSAYPVYCSGGGFLLSGPTARALRAAARHTPLFPIDDAYMGMCLERAGLAPSGHEGIRPFGVQLPGAQQSSFDPCMYRELLLVHRFAPYEMLLMWKALHSPALSCDRGHRVS</sequence>
<evidence type="ECO:0000255" key="1"/>
<evidence type="ECO:0000256" key="2">
    <source>
        <dbReference type="SAM" id="MobiDB-lite"/>
    </source>
</evidence>
<evidence type="ECO:0000269" key="3">
    <source>
    </source>
</evidence>
<evidence type="ECO:0000269" key="4">
    <source>
    </source>
</evidence>
<evidence type="ECO:0000303" key="5">
    <source>
    </source>
</evidence>
<evidence type="ECO:0000305" key="6"/>
<proteinExistence type="evidence at protein level"/>
<dbReference type="EC" id="2.4.1.147" evidence="4"/>
<dbReference type="EMBL" id="AB073740">
    <property type="protein sequence ID" value="BAB88882.1"/>
    <property type="molecule type" value="mRNA"/>
</dbReference>
<dbReference type="EMBL" id="AK127544">
    <property type="protein sequence ID" value="BAC87028.1"/>
    <property type="molecule type" value="mRNA"/>
</dbReference>
<dbReference type="EMBL" id="AK172863">
    <property type="protein sequence ID" value="BAD18819.1"/>
    <property type="molecule type" value="mRNA"/>
</dbReference>
<dbReference type="EMBL" id="AP000752">
    <property type="status" value="NOT_ANNOTATED_CDS"/>
    <property type="molecule type" value="Genomic_DNA"/>
</dbReference>
<dbReference type="EMBL" id="BC025357">
    <property type="protein sequence ID" value="AAH25357.1"/>
    <property type="molecule type" value="mRNA"/>
</dbReference>
<dbReference type="EMBL" id="BC103908">
    <property type="protein sequence ID" value="AAI03909.1"/>
    <property type="molecule type" value="mRNA"/>
</dbReference>
<dbReference type="EMBL" id="BC103909">
    <property type="protein sequence ID" value="AAI03910.1"/>
    <property type="molecule type" value="mRNA"/>
</dbReference>
<dbReference type="EMBL" id="BC103910">
    <property type="protein sequence ID" value="AAI03911.1"/>
    <property type="molecule type" value="mRNA"/>
</dbReference>
<dbReference type="CCDS" id="CCDS53681.1">
    <molecule id="Q6ZMB0-1"/>
</dbReference>
<dbReference type="RefSeq" id="NP_619651.3">
    <molecule id="Q6ZMB0-1"/>
    <property type="nucleotide sequence ID" value="NM_138706.4"/>
</dbReference>
<dbReference type="SMR" id="Q6ZMB0"/>
<dbReference type="FunCoup" id="Q6ZMB0">
    <property type="interactions" value="46"/>
</dbReference>
<dbReference type="STRING" id="9606.ENSP00000484640"/>
<dbReference type="ChEMBL" id="CHEMBL2321631"/>
<dbReference type="CAZy" id="GT31">
    <property type="family name" value="Glycosyltransferase Family 31"/>
</dbReference>
<dbReference type="GlyCosmos" id="Q6ZMB0">
    <property type="glycosylation" value="3 sites, No reported glycans"/>
</dbReference>
<dbReference type="GlyGen" id="Q6ZMB0">
    <property type="glycosylation" value="5 sites, 1 O-linked glycan (1 site)"/>
</dbReference>
<dbReference type="iPTMnet" id="Q6ZMB0"/>
<dbReference type="PhosphoSitePlus" id="Q6ZMB0"/>
<dbReference type="BioMuta" id="B3GNT6"/>
<dbReference type="DMDM" id="152033628"/>
<dbReference type="jPOST" id="Q6ZMB0"/>
<dbReference type="MassIVE" id="Q6ZMB0"/>
<dbReference type="PaxDb" id="9606-ENSP00000484640"/>
<dbReference type="PeptideAtlas" id="Q6ZMB0"/>
<dbReference type="ProteomicsDB" id="21560"/>
<dbReference type="ProteomicsDB" id="67861">
    <molecule id="Q6ZMB0-1"/>
</dbReference>
<dbReference type="ProteomicsDB" id="67862">
    <molecule id="Q6ZMB0-2"/>
</dbReference>
<dbReference type="Antibodypedia" id="31219">
    <property type="antibodies" value="98 antibodies from 24 providers"/>
</dbReference>
<dbReference type="DNASU" id="192134"/>
<dbReference type="Ensembl" id="ENST00000622824.1">
    <molecule id="Q6ZMB0-1"/>
    <property type="protein sequence ID" value="ENSP00000484640.1"/>
    <property type="gene ID" value="ENSG00000198488.10"/>
</dbReference>
<dbReference type="GeneID" id="192134"/>
<dbReference type="KEGG" id="hsa:192134"/>
<dbReference type="MANE-Select" id="ENST00000622824.1">
    <property type="protein sequence ID" value="ENSP00000484640.1"/>
    <property type="RefSeq nucleotide sequence ID" value="NM_138706.5"/>
    <property type="RefSeq protein sequence ID" value="NP_619651.3"/>
</dbReference>
<dbReference type="UCSC" id="uc031xwa.2">
    <molecule id="Q6ZMB0-1"/>
    <property type="organism name" value="human"/>
</dbReference>
<dbReference type="AGR" id="HGNC:24141"/>
<dbReference type="CTD" id="192134"/>
<dbReference type="DisGeNET" id="192134"/>
<dbReference type="GeneCards" id="B3GNT6"/>
<dbReference type="HGNC" id="HGNC:24141">
    <property type="gene designation" value="B3GNT6"/>
</dbReference>
<dbReference type="HPA" id="ENSG00000198488">
    <property type="expression patterns" value="Group enriched (intestine, salivary gland, stomach)"/>
</dbReference>
<dbReference type="MIM" id="615315">
    <property type="type" value="gene"/>
</dbReference>
<dbReference type="neXtProt" id="NX_Q6ZMB0"/>
<dbReference type="OpenTargets" id="ENSG00000198488"/>
<dbReference type="PharmGKB" id="PA164741288"/>
<dbReference type="VEuPathDB" id="HostDB:ENSG00000198488"/>
<dbReference type="eggNOG" id="KOG2287">
    <property type="taxonomic scope" value="Eukaryota"/>
</dbReference>
<dbReference type="GeneTree" id="ENSGT00940000163174"/>
<dbReference type="HOGENOM" id="CLU_036849_5_1_1"/>
<dbReference type="InParanoid" id="Q6ZMB0"/>
<dbReference type="OMA" id="MWKALHN"/>
<dbReference type="OrthoDB" id="2139606at2759"/>
<dbReference type="PAN-GO" id="Q6ZMB0">
    <property type="GO annotations" value="3 GO annotations based on evolutionary models"/>
</dbReference>
<dbReference type="PhylomeDB" id="Q6ZMB0"/>
<dbReference type="TreeFam" id="TF318639"/>
<dbReference type="BRENDA" id="2.4.1.147">
    <property type="organism ID" value="2681"/>
</dbReference>
<dbReference type="PathwayCommons" id="Q6ZMB0"/>
<dbReference type="Reactome" id="R-HSA-913709">
    <property type="pathway name" value="O-linked glycosylation of mucins"/>
</dbReference>
<dbReference type="UniPathway" id="UPA00378"/>
<dbReference type="BioGRID-ORCS" id="192134">
    <property type="hits" value="11 hits in 1134 CRISPR screens"/>
</dbReference>
<dbReference type="GenomeRNAi" id="192134"/>
<dbReference type="Pharos" id="Q6ZMB0">
    <property type="development level" value="Tbio"/>
</dbReference>
<dbReference type="PRO" id="PR:Q6ZMB0"/>
<dbReference type="Proteomes" id="UP000005640">
    <property type="component" value="Chromosome 11"/>
</dbReference>
<dbReference type="RNAct" id="Q6ZMB0">
    <property type="molecule type" value="protein"/>
</dbReference>
<dbReference type="Bgee" id="ENSG00000198488">
    <property type="expression patterns" value="Expressed in rectum and 65 other cell types or tissues"/>
</dbReference>
<dbReference type="ExpressionAtlas" id="Q6ZMB0">
    <property type="expression patterns" value="baseline and differential"/>
</dbReference>
<dbReference type="GO" id="GO:0000139">
    <property type="term" value="C:Golgi membrane"/>
    <property type="evidence" value="ECO:0000318"/>
    <property type="project" value="GO_Central"/>
</dbReference>
<dbReference type="GO" id="GO:0016020">
    <property type="term" value="C:membrane"/>
    <property type="evidence" value="ECO:0000303"/>
    <property type="project" value="UniProtKB"/>
</dbReference>
<dbReference type="GO" id="GO:0047224">
    <property type="term" value="F:acetylgalactosaminyl-O-glycosyl-glycoprotein beta-1,3-N-acetylglucosaminyltransferase activity"/>
    <property type="evidence" value="ECO:0007669"/>
    <property type="project" value="UniProtKB-EC"/>
</dbReference>
<dbReference type="GO" id="GO:0047223">
    <property type="term" value="F:beta-1,3-galactosyl-O-glycosyl-glycoprotein beta-1,3-N-acetylglucosaminyltransferase activity"/>
    <property type="evidence" value="ECO:0000303"/>
    <property type="project" value="UniProtKB"/>
</dbReference>
<dbReference type="GO" id="GO:0008378">
    <property type="term" value="F:galactosyltransferase activity"/>
    <property type="evidence" value="ECO:0000314"/>
    <property type="project" value="UniProtKB"/>
</dbReference>
<dbReference type="GO" id="GO:0008499">
    <property type="term" value="F:N-acetyl-beta-D-glucosaminide beta-(1,3)-galactosyltransferase activity"/>
    <property type="evidence" value="ECO:0000304"/>
    <property type="project" value="Reactome"/>
</dbReference>
<dbReference type="GO" id="GO:0008194">
    <property type="term" value="F:UDP-glycosyltransferase activity"/>
    <property type="evidence" value="ECO:0000318"/>
    <property type="project" value="GO_Central"/>
</dbReference>
<dbReference type="GO" id="GO:0016269">
    <property type="term" value="P:core 3 O-glycan biosynthetic process"/>
    <property type="evidence" value="ECO:0000303"/>
    <property type="project" value="UniProtKB"/>
</dbReference>
<dbReference type="GO" id="GO:0009101">
    <property type="term" value="P:glycoprotein biosynthetic process"/>
    <property type="evidence" value="ECO:0000303"/>
    <property type="project" value="UniProtKB"/>
</dbReference>
<dbReference type="GO" id="GO:0016266">
    <property type="term" value="P:O-glycan processing"/>
    <property type="evidence" value="ECO:0000304"/>
    <property type="project" value="Reactome"/>
</dbReference>
<dbReference type="GO" id="GO:0030311">
    <property type="term" value="P:poly-N-acetyllactosamine biosynthetic process"/>
    <property type="evidence" value="ECO:0000318"/>
    <property type="project" value="GO_Central"/>
</dbReference>
<dbReference type="GO" id="GO:0006493">
    <property type="term" value="P:protein O-linked glycosylation"/>
    <property type="evidence" value="ECO:0000318"/>
    <property type="project" value="GO_Central"/>
</dbReference>
<dbReference type="FunFam" id="3.90.550.50:FF:000009">
    <property type="entry name" value="Hexosyltransferase"/>
    <property type="match status" value="1"/>
</dbReference>
<dbReference type="Gene3D" id="3.90.550.50">
    <property type="match status" value="1"/>
</dbReference>
<dbReference type="InterPro" id="IPR002659">
    <property type="entry name" value="Glyco_trans_31"/>
</dbReference>
<dbReference type="PANTHER" id="PTHR11214:SF382">
    <property type="entry name" value="ACETYLGALACTOSAMINYL-O-GLYCOSYL-GLYCOPROTEIN BETA-1,3-N-ACETYLGLUCOSAMINYLTRANSFERASE"/>
    <property type="match status" value="1"/>
</dbReference>
<dbReference type="PANTHER" id="PTHR11214">
    <property type="entry name" value="BETA-1,3-N-ACETYLGLUCOSAMINYLTRANSFERASE"/>
    <property type="match status" value="1"/>
</dbReference>
<dbReference type="Pfam" id="PF01762">
    <property type="entry name" value="Galactosyl_T"/>
    <property type="match status" value="1"/>
</dbReference>
<comment type="function">
    <text>Beta-1,3-N-acetylglucosaminyltransferase that synthesizes the core 3 structure of the O-glycan, an important precursor in the biosynthesis of mucin-type glycoproteins. Plays an important role in the synthesis of mucin-type O-glycans in digestive organs.</text>
</comment>
<comment type="catalytic activity">
    <reaction evidence="4">
        <text>a 3-O-[N-acetyl-alpha-D-galactosaminyl]-L-threonyl-[protein] + UDP-N-acetyl-alpha-D-glucosamine = a 3-O-[N-acetyl-beta-D-glucosaminyl-(1-&gt;3)-N-acetyl-alpha-D-galactosaminyl]-L-threonyl-[protein] + UDP + H(+)</text>
        <dbReference type="Rhea" id="RHEA:46880"/>
        <dbReference type="Rhea" id="RHEA-COMP:11689"/>
        <dbReference type="Rhea" id="RHEA-COMP:11692"/>
        <dbReference type="ChEBI" id="CHEBI:15378"/>
        <dbReference type="ChEBI" id="CHEBI:57705"/>
        <dbReference type="ChEBI" id="CHEBI:58223"/>
        <dbReference type="ChEBI" id="CHEBI:87075"/>
        <dbReference type="ChEBI" id="CHEBI:87080"/>
        <dbReference type="EC" id="2.4.1.147"/>
    </reaction>
</comment>
<comment type="catalytic activity">
    <reaction evidence="4">
        <text>a 3-O-[N-acetyl-alpha-D-galactosaminyl]-L-seryl-[protein] + UDP-N-acetyl-alpha-D-glucosamine = 3-O-[N-acetyl-beta-D-glucosaminyl-(1-&gt;3)-N-acetyl-alpha-D-galactosaminyl]-L-seryl-[protein] + UDP + H(+)</text>
        <dbReference type="Rhea" id="RHEA:46884"/>
        <dbReference type="Rhea" id="RHEA-COMP:11691"/>
        <dbReference type="Rhea" id="RHEA-COMP:12788"/>
        <dbReference type="ChEBI" id="CHEBI:15378"/>
        <dbReference type="ChEBI" id="CHEBI:53604"/>
        <dbReference type="ChEBI" id="CHEBI:57705"/>
        <dbReference type="ChEBI" id="CHEBI:58223"/>
        <dbReference type="ChEBI" id="CHEBI:87079"/>
        <dbReference type="EC" id="2.4.1.147"/>
    </reaction>
</comment>
<comment type="biophysicochemical properties">
    <kinetics>
        <KM evidence="4">3.3 mM for GalNAc-alpha-Bn</KM>
        <Vmax evidence="4">4.5 nmol/h/mg enzyme with GalNAc-alpha-Bn as substrate</Vmax>
    </kinetics>
</comment>
<comment type="pathway">
    <text>Protein modification; protein glycosylation.</text>
</comment>
<comment type="subcellular location">
    <subcellularLocation>
        <location evidence="3">Golgi apparatus membrane</location>
        <topology evidence="3">Single-pass type II membrane protein</topology>
    </subcellularLocation>
</comment>
<comment type="alternative products">
    <event type="alternative splicing"/>
    <isoform>
        <id>Q6ZMB0-1</id>
        <name>1</name>
        <sequence type="displayed"/>
    </isoform>
    <isoform>
        <id>Q6ZMB0-2</id>
        <name>2</name>
        <sequence type="described" ref="VSP_025963 VSP_025964"/>
    </isoform>
    <isoform>
        <id>Q6ZMB0-3</id>
        <name>3</name>
        <sequence type="described" ref="VSP_047091"/>
    </isoform>
</comment>
<comment type="tissue specificity">
    <text evidence="3">Present in stomach and colon (at protein level). Restricted in the stomach, colon and small intestine, where core 3 structure is present.</text>
</comment>
<comment type="induction">
    <text>Down-regulated in gastric and colorectal carcinomas, suggesting that it may be used as a marker for distinguishing between benign adenomas and premalignant lesions (at protein level).</text>
</comment>
<comment type="miscellaneous">
    <text>Injection into nude mice significantly suppress lung metastasis, indicating that the core structures of O-glycans are profoundly involved in the metastatic capacity of cancer cells.</text>
</comment>
<comment type="similarity">
    <text evidence="6">Belongs to the glycosyltransferase 31 family.</text>
</comment>
<comment type="online information" name="Atlas of Genetics and Cytogenetics in Oncology and Haematology">
    <link uri="https://atlasgeneticsoncology.org/gene/44427/B3GNT6"/>
</comment>
<keyword id="KW-0025">Alternative splicing</keyword>
<keyword id="KW-0325">Glycoprotein</keyword>
<keyword id="KW-0328">Glycosyltransferase</keyword>
<keyword id="KW-0333">Golgi apparatus</keyword>
<keyword id="KW-0472">Membrane</keyword>
<keyword id="KW-1267">Proteomics identification</keyword>
<keyword id="KW-1185">Reference proteome</keyword>
<keyword id="KW-0735">Signal-anchor</keyword>
<keyword id="KW-0808">Transferase</keyword>
<keyword id="KW-0812">Transmembrane</keyword>
<keyword id="KW-1133">Transmembrane helix</keyword>
<feature type="chain" id="PRO_0000289218" description="Acetylgalactosaminyl-O-glycosyl-glycoprotein beta-1,3-N-acetylglucosaminyltransferase">
    <location>
        <begin position="1"/>
        <end position="384"/>
    </location>
</feature>
<feature type="topological domain" description="Cytoplasmic" evidence="1">
    <location>
        <begin position="1"/>
        <end position="12"/>
    </location>
</feature>
<feature type="transmembrane region" description="Helical; Signal-anchor for type II membrane protein" evidence="1">
    <location>
        <begin position="13"/>
        <end position="31"/>
    </location>
</feature>
<feature type="topological domain" description="Lumenal" evidence="1">
    <location>
        <begin position="32"/>
        <end position="384"/>
    </location>
</feature>
<feature type="region of interest" description="Disordered" evidence="2">
    <location>
        <begin position="34"/>
        <end position="68"/>
    </location>
</feature>
<feature type="glycosylation site" description="N-linked (GlcNAc...) asparagine" evidence="1">
    <location>
        <position position="73"/>
    </location>
</feature>
<feature type="glycosylation site" description="N-linked (GlcNAc...) asparagine" evidence="1">
    <location>
        <position position="77"/>
    </location>
</feature>
<feature type="glycosylation site" description="N-linked (GlcNAc...) asparagine" evidence="1">
    <location>
        <position position="196"/>
    </location>
</feature>
<feature type="splice variant" id="VSP_025963" description="In isoform 2." evidence="5">
    <original>ALQQWFLQAPRSPREERSPQEETPEGPTDAPAADEPPSELVPGPPCVANASANATADFEQLPARIQDFLRYRHCRHFPLLWDAPAKCAGGRGVFLLLAVKSAPEHYERRELIRRTWGQERSYG</original>
    <variation>VLQRRRLPPVRPHGPGPARGRPPHPALPHRRRLH</variation>
    <location>
        <begin position="25"/>
        <end position="147"/>
    </location>
</feature>
<feature type="splice variant" id="VSP_025964" description="In isoform 2." evidence="5">
    <location>
        <begin position="289"/>
        <end position="319"/>
    </location>
</feature>
<feature type="splice variant" id="VSP_047091" description="In isoform 3." evidence="6">
    <original>ERAGLAPSGHEGIRPFGVQ</original>
    <variation>GARRPGAQRPRGHPGPSACS</variation>
    <location>
        <begin position="317"/>
        <end position="335"/>
    </location>
</feature>
<feature type="sequence conflict" description="In Ref. 2; BAD18819." evidence="6" ref="2">
    <original>D</original>
    <variation>N</variation>
    <location>
        <position position="164"/>
    </location>
</feature>
<feature type="sequence conflict" description="In Ref. 4; AAH25357." evidence="6" ref="4">
    <original>A</original>
    <variation>T</variation>
    <location>
        <position position="191"/>
    </location>
</feature>
<reference key="1">
    <citation type="journal article" date="2002" name="J. Biol. Chem.">
        <title>Molecular cloning and characterization of a novel UDP-GlcNAc:GalNAc-peptide beta1,3-N-acetylglucosaminyltransferase (beta 3Gn-T6), an enzyme synthesizing the core 3 structure of O-glycans.</title>
        <authorList>
            <person name="Iwai T."/>
            <person name="Inaba N."/>
            <person name="Naundorf A."/>
            <person name="Zhang Y."/>
            <person name="Gotoh M."/>
            <person name="Iwasaki H."/>
            <person name="Kudo T."/>
            <person name="Togayachi A."/>
            <person name="Ishizuka Y."/>
            <person name="Nakanishi H."/>
            <person name="Narimatsu H."/>
        </authorList>
    </citation>
    <scope>NUCLEOTIDE SEQUENCE [MRNA] (ISOFORM 1)</scope>
</reference>
<reference key="2">
    <citation type="journal article" date="2004" name="Nat. Genet.">
        <title>Complete sequencing and characterization of 21,243 full-length human cDNAs.</title>
        <authorList>
            <person name="Ota T."/>
            <person name="Suzuki Y."/>
            <person name="Nishikawa T."/>
            <person name="Otsuki T."/>
            <person name="Sugiyama T."/>
            <person name="Irie R."/>
            <person name="Wakamatsu A."/>
            <person name="Hayashi K."/>
            <person name="Sato H."/>
            <person name="Nagai K."/>
            <person name="Kimura K."/>
            <person name="Makita H."/>
            <person name="Sekine M."/>
            <person name="Obayashi M."/>
            <person name="Nishi T."/>
            <person name="Shibahara T."/>
            <person name="Tanaka T."/>
            <person name="Ishii S."/>
            <person name="Yamamoto J."/>
            <person name="Saito K."/>
            <person name="Kawai Y."/>
            <person name="Isono Y."/>
            <person name="Nakamura Y."/>
            <person name="Nagahari K."/>
            <person name="Murakami K."/>
            <person name="Yasuda T."/>
            <person name="Iwayanagi T."/>
            <person name="Wagatsuma M."/>
            <person name="Shiratori A."/>
            <person name="Sudo H."/>
            <person name="Hosoiri T."/>
            <person name="Kaku Y."/>
            <person name="Kodaira H."/>
            <person name="Kondo H."/>
            <person name="Sugawara M."/>
            <person name="Takahashi M."/>
            <person name="Kanda K."/>
            <person name="Yokoi T."/>
            <person name="Furuya T."/>
            <person name="Kikkawa E."/>
            <person name="Omura Y."/>
            <person name="Abe K."/>
            <person name="Kamihara K."/>
            <person name="Katsuta N."/>
            <person name="Sato K."/>
            <person name="Tanikawa M."/>
            <person name="Yamazaki M."/>
            <person name="Ninomiya K."/>
            <person name="Ishibashi T."/>
            <person name="Yamashita H."/>
            <person name="Murakawa K."/>
            <person name="Fujimori K."/>
            <person name="Tanai H."/>
            <person name="Kimata M."/>
            <person name="Watanabe M."/>
            <person name="Hiraoka S."/>
            <person name="Chiba Y."/>
            <person name="Ishida S."/>
            <person name="Ono Y."/>
            <person name="Takiguchi S."/>
            <person name="Watanabe S."/>
            <person name="Yosida M."/>
            <person name="Hotuta T."/>
            <person name="Kusano J."/>
            <person name="Kanehori K."/>
            <person name="Takahashi-Fujii A."/>
            <person name="Hara H."/>
            <person name="Tanase T.-O."/>
            <person name="Nomura Y."/>
            <person name="Togiya S."/>
            <person name="Komai F."/>
            <person name="Hara R."/>
            <person name="Takeuchi K."/>
            <person name="Arita M."/>
            <person name="Imose N."/>
            <person name="Musashino K."/>
            <person name="Yuuki H."/>
            <person name="Oshima A."/>
            <person name="Sasaki N."/>
            <person name="Aotsuka S."/>
            <person name="Yoshikawa Y."/>
            <person name="Matsunawa H."/>
            <person name="Ichihara T."/>
            <person name="Shiohata N."/>
            <person name="Sano S."/>
            <person name="Moriya S."/>
            <person name="Momiyama H."/>
            <person name="Satoh N."/>
            <person name="Takami S."/>
            <person name="Terashima Y."/>
            <person name="Suzuki O."/>
            <person name="Nakagawa S."/>
            <person name="Senoh A."/>
            <person name="Mizoguchi H."/>
            <person name="Goto Y."/>
            <person name="Shimizu F."/>
            <person name="Wakebe H."/>
            <person name="Hishigaki H."/>
            <person name="Watanabe T."/>
            <person name="Sugiyama A."/>
            <person name="Takemoto M."/>
            <person name="Kawakami B."/>
            <person name="Yamazaki M."/>
            <person name="Watanabe K."/>
            <person name="Kumagai A."/>
            <person name="Itakura S."/>
            <person name="Fukuzumi Y."/>
            <person name="Fujimori Y."/>
            <person name="Komiyama M."/>
            <person name="Tashiro H."/>
            <person name="Tanigami A."/>
            <person name="Fujiwara T."/>
            <person name="Ono T."/>
            <person name="Yamada K."/>
            <person name="Fujii Y."/>
            <person name="Ozaki K."/>
            <person name="Hirao M."/>
            <person name="Ohmori Y."/>
            <person name="Kawabata A."/>
            <person name="Hikiji T."/>
            <person name="Kobatake N."/>
            <person name="Inagaki H."/>
            <person name="Ikema Y."/>
            <person name="Okamoto S."/>
            <person name="Okitani R."/>
            <person name="Kawakami T."/>
            <person name="Noguchi S."/>
            <person name="Itoh T."/>
            <person name="Shigeta K."/>
            <person name="Senba T."/>
            <person name="Matsumura K."/>
            <person name="Nakajima Y."/>
            <person name="Mizuno T."/>
            <person name="Morinaga M."/>
            <person name="Sasaki M."/>
            <person name="Togashi T."/>
            <person name="Oyama M."/>
            <person name="Hata H."/>
            <person name="Watanabe M."/>
            <person name="Komatsu T."/>
            <person name="Mizushima-Sugano J."/>
            <person name="Satoh T."/>
            <person name="Shirai Y."/>
            <person name="Takahashi Y."/>
            <person name="Nakagawa K."/>
            <person name="Okumura K."/>
            <person name="Nagase T."/>
            <person name="Nomura N."/>
            <person name="Kikuchi H."/>
            <person name="Masuho Y."/>
            <person name="Yamashita R."/>
            <person name="Nakai K."/>
            <person name="Yada T."/>
            <person name="Nakamura Y."/>
            <person name="Ohara O."/>
            <person name="Isogai T."/>
            <person name="Sugano S."/>
        </authorList>
    </citation>
    <scope>NUCLEOTIDE SEQUENCE [LARGE SCALE MRNA] (ISOFORMS 1 AND 2)</scope>
    <source>
        <tissue>Ileal mucosa</tissue>
    </source>
</reference>
<reference key="3">
    <citation type="journal article" date="2006" name="Nature">
        <title>Human chromosome 11 DNA sequence and analysis including novel gene identification.</title>
        <authorList>
            <person name="Taylor T.D."/>
            <person name="Noguchi H."/>
            <person name="Totoki Y."/>
            <person name="Toyoda A."/>
            <person name="Kuroki Y."/>
            <person name="Dewar K."/>
            <person name="Lloyd C."/>
            <person name="Itoh T."/>
            <person name="Takeda T."/>
            <person name="Kim D.-W."/>
            <person name="She X."/>
            <person name="Barlow K.F."/>
            <person name="Bloom T."/>
            <person name="Bruford E."/>
            <person name="Chang J.L."/>
            <person name="Cuomo C.A."/>
            <person name="Eichler E."/>
            <person name="FitzGerald M.G."/>
            <person name="Jaffe D.B."/>
            <person name="LaButti K."/>
            <person name="Nicol R."/>
            <person name="Park H.-S."/>
            <person name="Seaman C."/>
            <person name="Sougnez C."/>
            <person name="Yang X."/>
            <person name="Zimmer A.R."/>
            <person name="Zody M.C."/>
            <person name="Birren B.W."/>
            <person name="Nusbaum C."/>
            <person name="Fujiyama A."/>
            <person name="Hattori M."/>
            <person name="Rogers J."/>
            <person name="Lander E.S."/>
            <person name="Sakaki Y."/>
        </authorList>
    </citation>
    <scope>NUCLEOTIDE SEQUENCE [LARGE SCALE GENOMIC DNA]</scope>
</reference>
<reference key="4">
    <citation type="journal article" date="2004" name="Genome Res.">
        <title>The status, quality, and expansion of the NIH full-length cDNA project: the Mammalian Gene Collection (MGC).</title>
        <authorList>
            <consortium name="The MGC Project Team"/>
        </authorList>
    </citation>
    <scope>NUCLEOTIDE SEQUENCE [LARGE SCALE MRNA] (ISOFORM 1)</scope>
    <source>
        <tissue>Pancreas</tissue>
    </source>
</reference>
<reference key="5">
    <citation type="journal article" date="1995" name="Glycobiology">
        <title>Synthesis of O-glycan core 3: characterization of UDP-GlcNAc: GalNAc-R beta 3-N-acetyl-glucosaminyltransferase activity from colonic mucosal tissues and lack of the activity in human cancer cell lines.</title>
        <authorList>
            <person name="Vavasseur F."/>
            <person name="Yang J.M."/>
            <person name="Dole K."/>
            <person name="Paulsen H."/>
            <person name="Brockhausen I."/>
        </authorList>
    </citation>
    <scope>CATALYTIC ACTIVITY</scope>
    <scope>BIOPHYSICOCHEMICAL PROPERTIES</scope>
    <scope>SUBSTRATE SPECIFICITY</scope>
</reference>
<reference key="6">
    <citation type="journal article" date="2005" name="Proc. Natl. Acad. Sci. U.S.A.">
        <title>Core 3 synthase is down-regulated in colon carcinoma and profoundly suppresses the metastatic potential of carcinoma cells.</title>
        <authorList>
            <person name="Iwai T."/>
            <person name="Kudo T."/>
            <person name="Kawamoto R."/>
            <person name="Kubota T."/>
            <person name="Togayachi A."/>
            <person name="Hiruma T."/>
            <person name="Okada T."/>
            <person name="Kawamoto T."/>
            <person name="Morozumi K."/>
            <person name="Narimatsu H."/>
        </authorList>
    </citation>
    <scope>SUBCELLULAR LOCATION</scope>
    <scope>TISSUE SPECIFICITY</scope>
</reference>
<gene>
    <name type="primary">B3GNT6</name>
</gene>